<sequence>MTEQRMALVASPTTAAQEAATELRAIYEWHPIERADLVVALGGDGFMLRTLHAMLDRHRILPVFGMNLGTVGFLMNDWKPDLLELRLQQARAITVLPLRMDVETVEGQRHSVPAINEVSLLRETRETAKIEVLVDGRVVLPELVCDGVLVSTPAGSTAYNLSAQGPILPLESSLLALTPISPFRPRRWRGAILPNKNAISFRVLDAIKRPVSAVADQREVRDVSLIRVGIDKTSPLTLLFDPEHALDDRITMEQFAV</sequence>
<comment type="function">
    <text evidence="1">Involved in the regulation of the intracellular balance of NAD and NADP, and is a key enzyme in the biosynthesis of NADP. Catalyzes specifically the phosphorylation on 2'-hydroxyl of the adenosine moiety of NAD to yield NADP.</text>
</comment>
<comment type="catalytic activity">
    <reaction evidence="1">
        <text>NAD(+) + ATP = ADP + NADP(+) + H(+)</text>
        <dbReference type="Rhea" id="RHEA:18629"/>
        <dbReference type="ChEBI" id="CHEBI:15378"/>
        <dbReference type="ChEBI" id="CHEBI:30616"/>
        <dbReference type="ChEBI" id="CHEBI:57540"/>
        <dbReference type="ChEBI" id="CHEBI:58349"/>
        <dbReference type="ChEBI" id="CHEBI:456216"/>
        <dbReference type="EC" id="2.7.1.23"/>
    </reaction>
</comment>
<comment type="cofactor">
    <cofactor evidence="1">
        <name>a divalent metal cation</name>
        <dbReference type="ChEBI" id="CHEBI:60240"/>
    </cofactor>
</comment>
<comment type="subcellular location">
    <subcellularLocation>
        <location evidence="1">Cytoplasm</location>
    </subcellularLocation>
</comment>
<comment type="similarity">
    <text evidence="1">Belongs to the NAD kinase family.</text>
</comment>
<protein>
    <recommendedName>
        <fullName evidence="1">NAD kinase</fullName>
        <ecNumber evidence="1">2.7.1.23</ecNumber>
    </recommendedName>
    <alternativeName>
        <fullName evidence="1">ATP-dependent NAD kinase</fullName>
    </alternativeName>
</protein>
<accession>A5V6G8</accession>
<proteinExistence type="inferred from homology"/>
<organism>
    <name type="scientific">Rhizorhabdus wittichii (strain DSM 6014 / CCUG 31198 / JCM 15750 / NBRC 105917 / EY 4224 / RW1)</name>
    <name type="common">Sphingomonas wittichii</name>
    <dbReference type="NCBI Taxonomy" id="392499"/>
    <lineage>
        <taxon>Bacteria</taxon>
        <taxon>Pseudomonadati</taxon>
        <taxon>Pseudomonadota</taxon>
        <taxon>Alphaproteobacteria</taxon>
        <taxon>Sphingomonadales</taxon>
        <taxon>Sphingomonadaceae</taxon>
        <taxon>Rhizorhabdus</taxon>
    </lineage>
</organism>
<dbReference type="EC" id="2.7.1.23" evidence="1"/>
<dbReference type="EMBL" id="CP000699">
    <property type="protein sequence ID" value="ABQ67884.1"/>
    <property type="molecule type" value="Genomic_DNA"/>
</dbReference>
<dbReference type="SMR" id="A5V6G8"/>
<dbReference type="STRING" id="392499.Swit_1521"/>
<dbReference type="PaxDb" id="392499-Swit_1521"/>
<dbReference type="KEGG" id="swi:Swit_1521"/>
<dbReference type="eggNOG" id="COG0061">
    <property type="taxonomic scope" value="Bacteria"/>
</dbReference>
<dbReference type="HOGENOM" id="CLU_073319_0_0_5"/>
<dbReference type="OrthoDB" id="9774737at2"/>
<dbReference type="Proteomes" id="UP000001989">
    <property type="component" value="Chromosome"/>
</dbReference>
<dbReference type="GO" id="GO:0005737">
    <property type="term" value="C:cytoplasm"/>
    <property type="evidence" value="ECO:0007669"/>
    <property type="project" value="UniProtKB-SubCell"/>
</dbReference>
<dbReference type="GO" id="GO:0005524">
    <property type="term" value="F:ATP binding"/>
    <property type="evidence" value="ECO:0007669"/>
    <property type="project" value="UniProtKB-KW"/>
</dbReference>
<dbReference type="GO" id="GO:0046872">
    <property type="term" value="F:metal ion binding"/>
    <property type="evidence" value="ECO:0007669"/>
    <property type="project" value="UniProtKB-UniRule"/>
</dbReference>
<dbReference type="GO" id="GO:0051287">
    <property type="term" value="F:NAD binding"/>
    <property type="evidence" value="ECO:0007669"/>
    <property type="project" value="UniProtKB-ARBA"/>
</dbReference>
<dbReference type="GO" id="GO:0003951">
    <property type="term" value="F:NAD+ kinase activity"/>
    <property type="evidence" value="ECO:0007669"/>
    <property type="project" value="UniProtKB-UniRule"/>
</dbReference>
<dbReference type="GO" id="GO:0019674">
    <property type="term" value="P:NAD metabolic process"/>
    <property type="evidence" value="ECO:0007669"/>
    <property type="project" value="InterPro"/>
</dbReference>
<dbReference type="GO" id="GO:0006741">
    <property type="term" value="P:NADP biosynthetic process"/>
    <property type="evidence" value="ECO:0007669"/>
    <property type="project" value="UniProtKB-UniRule"/>
</dbReference>
<dbReference type="Gene3D" id="3.40.50.10330">
    <property type="entry name" value="Probable inorganic polyphosphate/atp-NAD kinase, domain 1"/>
    <property type="match status" value="1"/>
</dbReference>
<dbReference type="Gene3D" id="2.60.200.30">
    <property type="entry name" value="Probable inorganic polyphosphate/atp-NAD kinase, domain 2"/>
    <property type="match status" value="1"/>
</dbReference>
<dbReference type="HAMAP" id="MF_00361">
    <property type="entry name" value="NAD_kinase"/>
    <property type="match status" value="1"/>
</dbReference>
<dbReference type="InterPro" id="IPR017438">
    <property type="entry name" value="ATP-NAD_kinase_N"/>
</dbReference>
<dbReference type="InterPro" id="IPR017437">
    <property type="entry name" value="ATP-NAD_kinase_PpnK-typ_C"/>
</dbReference>
<dbReference type="InterPro" id="IPR016064">
    <property type="entry name" value="NAD/diacylglycerol_kinase_sf"/>
</dbReference>
<dbReference type="InterPro" id="IPR002504">
    <property type="entry name" value="NADK"/>
</dbReference>
<dbReference type="NCBIfam" id="NF003406">
    <property type="entry name" value="PRK04761.1"/>
    <property type="match status" value="1"/>
</dbReference>
<dbReference type="PANTHER" id="PTHR20275">
    <property type="entry name" value="NAD KINASE"/>
    <property type="match status" value="1"/>
</dbReference>
<dbReference type="PANTHER" id="PTHR20275:SF0">
    <property type="entry name" value="NAD KINASE"/>
    <property type="match status" value="1"/>
</dbReference>
<dbReference type="Pfam" id="PF01513">
    <property type="entry name" value="NAD_kinase"/>
    <property type="match status" value="1"/>
</dbReference>
<dbReference type="Pfam" id="PF20143">
    <property type="entry name" value="NAD_kinase_C"/>
    <property type="match status" value="1"/>
</dbReference>
<dbReference type="SUPFAM" id="SSF111331">
    <property type="entry name" value="NAD kinase/diacylglycerol kinase-like"/>
    <property type="match status" value="1"/>
</dbReference>
<reference key="1">
    <citation type="journal article" date="2010" name="J. Bacteriol.">
        <title>Genome sequence of the dioxin-mineralizing bacterium Sphingomonas wittichii RW1.</title>
        <authorList>
            <person name="Miller T.R."/>
            <person name="Delcher A.L."/>
            <person name="Salzberg S.L."/>
            <person name="Saunders E."/>
            <person name="Detter J.C."/>
            <person name="Halden R.U."/>
        </authorList>
    </citation>
    <scope>NUCLEOTIDE SEQUENCE [LARGE SCALE GENOMIC DNA]</scope>
    <source>
        <strain>DSM 6014 / CCUG 31198 / JCM 15750 / NBRC 105917 / EY 4224 / RW1</strain>
    </source>
</reference>
<gene>
    <name evidence="1" type="primary">nadK</name>
    <name type="ordered locus">Swit_1521</name>
</gene>
<keyword id="KW-0067">ATP-binding</keyword>
<keyword id="KW-0963">Cytoplasm</keyword>
<keyword id="KW-0418">Kinase</keyword>
<keyword id="KW-0520">NAD</keyword>
<keyword id="KW-0521">NADP</keyword>
<keyword id="KW-0547">Nucleotide-binding</keyword>
<keyword id="KW-1185">Reference proteome</keyword>
<keyword id="KW-0808">Transferase</keyword>
<feature type="chain" id="PRO_1000005443" description="NAD kinase">
    <location>
        <begin position="1"/>
        <end position="257"/>
    </location>
</feature>
<feature type="active site" description="Proton acceptor" evidence="1">
    <location>
        <position position="44"/>
    </location>
</feature>
<feature type="binding site" evidence="1">
    <location>
        <begin position="44"/>
        <end position="45"/>
    </location>
    <ligand>
        <name>NAD(+)</name>
        <dbReference type="ChEBI" id="CHEBI:57540"/>
    </ligand>
</feature>
<feature type="binding site" evidence="1">
    <location>
        <position position="49"/>
    </location>
    <ligand>
        <name>NAD(+)</name>
        <dbReference type="ChEBI" id="CHEBI:57540"/>
    </ligand>
</feature>
<feature type="binding site" evidence="1">
    <location>
        <begin position="116"/>
        <end position="117"/>
    </location>
    <ligand>
        <name>NAD(+)</name>
        <dbReference type="ChEBI" id="CHEBI:57540"/>
    </ligand>
</feature>
<feature type="binding site" evidence="1">
    <location>
        <position position="146"/>
    </location>
    <ligand>
        <name>NAD(+)</name>
        <dbReference type="ChEBI" id="CHEBI:57540"/>
    </ligand>
</feature>
<feature type="binding site" evidence="1">
    <location>
        <position position="154"/>
    </location>
    <ligand>
        <name>NAD(+)</name>
        <dbReference type="ChEBI" id="CHEBI:57540"/>
    </ligand>
</feature>
<feature type="binding site" evidence="1">
    <location>
        <begin position="157"/>
        <end position="162"/>
    </location>
    <ligand>
        <name>NAD(+)</name>
        <dbReference type="ChEBI" id="CHEBI:57540"/>
    </ligand>
</feature>
<evidence type="ECO:0000255" key="1">
    <source>
        <dbReference type="HAMAP-Rule" id="MF_00361"/>
    </source>
</evidence>
<name>NADK_RHIWR</name>